<dbReference type="EC" id="1.14.11.-" evidence="2"/>
<dbReference type="EMBL" id="AC018908">
    <property type="protein sequence ID" value="AAG51653.1"/>
    <property type="molecule type" value="Genomic_DNA"/>
</dbReference>
<dbReference type="EMBL" id="CP002684">
    <property type="protein sequence ID" value="AEE33755.1"/>
    <property type="molecule type" value="Genomic_DNA"/>
</dbReference>
<dbReference type="EMBL" id="DQ056503">
    <property type="protein sequence ID" value="AAY78660.1"/>
    <property type="molecule type" value="mRNA"/>
</dbReference>
<dbReference type="PIR" id="D96635">
    <property type="entry name" value="D96635"/>
</dbReference>
<dbReference type="RefSeq" id="NP_176294.1">
    <property type="nucleotide sequence ID" value="NM_104778.1"/>
</dbReference>
<dbReference type="SMR" id="Q9C955"/>
<dbReference type="FunCoup" id="Q9C955">
    <property type="interactions" value="20"/>
</dbReference>
<dbReference type="STRING" id="3702.Q9C955"/>
<dbReference type="PaxDb" id="3702-AT1G60980.1"/>
<dbReference type="ProteomicsDB" id="248478"/>
<dbReference type="EnsemblPlants" id="AT1G60980.1">
    <property type="protein sequence ID" value="AT1G60980.1"/>
    <property type="gene ID" value="AT1G60980"/>
</dbReference>
<dbReference type="GeneID" id="842389"/>
<dbReference type="Gramene" id="AT1G60980.1">
    <property type="protein sequence ID" value="AT1G60980.1"/>
    <property type="gene ID" value="AT1G60980"/>
</dbReference>
<dbReference type="KEGG" id="ath:AT1G60980"/>
<dbReference type="Araport" id="AT1G60980"/>
<dbReference type="TAIR" id="AT1G60980">
    <property type="gene designation" value="GA20OX4"/>
</dbReference>
<dbReference type="eggNOG" id="KOG0143">
    <property type="taxonomic scope" value="Eukaryota"/>
</dbReference>
<dbReference type="HOGENOM" id="CLU_010119_16_3_1"/>
<dbReference type="InParanoid" id="Q9C955"/>
<dbReference type="OMA" id="VQSYILN"/>
<dbReference type="PhylomeDB" id="Q9C955"/>
<dbReference type="BioCyc" id="MetaCyc:AT1G60980-MONOMER"/>
<dbReference type="UniPathway" id="UPA00390"/>
<dbReference type="PRO" id="PR:Q9C955"/>
<dbReference type="Proteomes" id="UP000006548">
    <property type="component" value="Chromosome 1"/>
</dbReference>
<dbReference type="ExpressionAtlas" id="Q9C955">
    <property type="expression patterns" value="baseline and differential"/>
</dbReference>
<dbReference type="GO" id="GO:0045544">
    <property type="term" value="F:gibberellin 20-oxidase activity"/>
    <property type="evidence" value="ECO:0007669"/>
    <property type="project" value="RHEA"/>
</dbReference>
<dbReference type="GO" id="GO:0046872">
    <property type="term" value="F:metal ion binding"/>
    <property type="evidence" value="ECO:0007669"/>
    <property type="project" value="UniProtKB-KW"/>
</dbReference>
<dbReference type="GO" id="GO:0009686">
    <property type="term" value="P:gibberellin biosynthetic process"/>
    <property type="evidence" value="ECO:0007669"/>
    <property type="project" value="UniProtKB-UniPathway"/>
</dbReference>
<dbReference type="FunFam" id="2.60.120.330:FF:000003">
    <property type="entry name" value="Gibberellin 20 oxidase 2"/>
    <property type="match status" value="1"/>
</dbReference>
<dbReference type="Gene3D" id="2.60.120.330">
    <property type="entry name" value="B-lactam Antibiotic, Isopenicillin N Synthase, Chain"/>
    <property type="match status" value="1"/>
</dbReference>
<dbReference type="InterPro" id="IPR026992">
    <property type="entry name" value="DIOX_N"/>
</dbReference>
<dbReference type="InterPro" id="IPR044861">
    <property type="entry name" value="IPNS-like_FE2OG_OXY"/>
</dbReference>
<dbReference type="InterPro" id="IPR027443">
    <property type="entry name" value="IPNS-like_sf"/>
</dbReference>
<dbReference type="InterPro" id="IPR050231">
    <property type="entry name" value="Iron_ascorbate_oxido_reductase"/>
</dbReference>
<dbReference type="InterPro" id="IPR005123">
    <property type="entry name" value="Oxoglu/Fe-dep_dioxygenase_dom"/>
</dbReference>
<dbReference type="PANTHER" id="PTHR47990">
    <property type="entry name" value="2-OXOGLUTARATE (2OG) AND FE(II)-DEPENDENT OXYGENASE SUPERFAMILY PROTEIN-RELATED"/>
    <property type="match status" value="1"/>
</dbReference>
<dbReference type="Pfam" id="PF03171">
    <property type="entry name" value="2OG-FeII_Oxy"/>
    <property type="match status" value="1"/>
</dbReference>
<dbReference type="Pfam" id="PF14226">
    <property type="entry name" value="DIOX_N"/>
    <property type="match status" value="1"/>
</dbReference>
<dbReference type="PRINTS" id="PR00682">
    <property type="entry name" value="IPNSYNTHASE"/>
</dbReference>
<dbReference type="SUPFAM" id="SSF51197">
    <property type="entry name" value="Clavaminate synthase-like"/>
    <property type="match status" value="1"/>
</dbReference>
<dbReference type="PROSITE" id="PS51471">
    <property type="entry name" value="FE2OG_OXY"/>
    <property type="match status" value="1"/>
</dbReference>
<reference key="1">
    <citation type="journal article" date="2000" name="Nature">
        <title>Sequence and analysis of chromosome 1 of the plant Arabidopsis thaliana.</title>
        <authorList>
            <person name="Theologis A."/>
            <person name="Ecker J.R."/>
            <person name="Palm C.J."/>
            <person name="Federspiel N.A."/>
            <person name="Kaul S."/>
            <person name="White O."/>
            <person name="Alonso J."/>
            <person name="Altafi H."/>
            <person name="Araujo R."/>
            <person name="Bowman C.L."/>
            <person name="Brooks S.Y."/>
            <person name="Buehler E."/>
            <person name="Chan A."/>
            <person name="Chao Q."/>
            <person name="Chen H."/>
            <person name="Cheuk R.F."/>
            <person name="Chin C.W."/>
            <person name="Chung M.K."/>
            <person name="Conn L."/>
            <person name="Conway A.B."/>
            <person name="Conway A.R."/>
            <person name="Creasy T.H."/>
            <person name="Dewar K."/>
            <person name="Dunn P."/>
            <person name="Etgu P."/>
            <person name="Feldblyum T.V."/>
            <person name="Feng J.-D."/>
            <person name="Fong B."/>
            <person name="Fujii C.Y."/>
            <person name="Gill J.E."/>
            <person name="Goldsmith A.D."/>
            <person name="Haas B."/>
            <person name="Hansen N.F."/>
            <person name="Hughes B."/>
            <person name="Huizar L."/>
            <person name="Hunter J.L."/>
            <person name="Jenkins J."/>
            <person name="Johnson-Hopson C."/>
            <person name="Khan S."/>
            <person name="Khaykin E."/>
            <person name="Kim C.J."/>
            <person name="Koo H.L."/>
            <person name="Kremenetskaia I."/>
            <person name="Kurtz D.B."/>
            <person name="Kwan A."/>
            <person name="Lam B."/>
            <person name="Langin-Hooper S."/>
            <person name="Lee A."/>
            <person name="Lee J.M."/>
            <person name="Lenz C.A."/>
            <person name="Li J.H."/>
            <person name="Li Y.-P."/>
            <person name="Lin X."/>
            <person name="Liu S.X."/>
            <person name="Liu Z.A."/>
            <person name="Luros J.S."/>
            <person name="Maiti R."/>
            <person name="Marziali A."/>
            <person name="Militscher J."/>
            <person name="Miranda M."/>
            <person name="Nguyen M."/>
            <person name="Nierman W.C."/>
            <person name="Osborne B.I."/>
            <person name="Pai G."/>
            <person name="Peterson J."/>
            <person name="Pham P.K."/>
            <person name="Rizzo M."/>
            <person name="Rooney T."/>
            <person name="Rowley D."/>
            <person name="Sakano H."/>
            <person name="Salzberg S.L."/>
            <person name="Schwartz J.R."/>
            <person name="Shinn P."/>
            <person name="Southwick A.M."/>
            <person name="Sun H."/>
            <person name="Tallon L.J."/>
            <person name="Tambunga G."/>
            <person name="Toriumi M.J."/>
            <person name="Town C.D."/>
            <person name="Utterback T."/>
            <person name="Van Aken S."/>
            <person name="Vaysberg M."/>
            <person name="Vysotskaia V.S."/>
            <person name="Walker M."/>
            <person name="Wu D."/>
            <person name="Yu G."/>
            <person name="Fraser C.M."/>
            <person name="Venter J.C."/>
            <person name="Davis R.W."/>
        </authorList>
    </citation>
    <scope>NUCLEOTIDE SEQUENCE [LARGE SCALE GENOMIC DNA]</scope>
    <source>
        <strain>cv. Columbia</strain>
    </source>
</reference>
<reference key="2">
    <citation type="journal article" date="2017" name="Plant J.">
        <title>Araport11: a complete reannotation of the Arabidopsis thaliana reference genome.</title>
        <authorList>
            <person name="Cheng C.Y."/>
            <person name="Krishnakumar V."/>
            <person name="Chan A.P."/>
            <person name="Thibaud-Nissen F."/>
            <person name="Schobel S."/>
            <person name="Town C.D."/>
        </authorList>
    </citation>
    <scope>GENOME REANNOTATION</scope>
    <source>
        <strain>cv. Columbia</strain>
    </source>
</reference>
<reference key="3">
    <citation type="submission" date="2005-05" db="EMBL/GenBank/DDBJ databases">
        <authorList>
            <person name="Underwood B.A."/>
            <person name="Xiao Y.-L."/>
            <person name="Moskal W.A. Jr."/>
            <person name="Monaghan E.L."/>
            <person name="Wang W."/>
            <person name="Redman J.C."/>
            <person name="Wu H.C."/>
            <person name="Utterback T."/>
            <person name="Town C.D."/>
        </authorList>
    </citation>
    <scope>NUCLEOTIDE SEQUENCE [LARGE SCALE MRNA]</scope>
    <source>
        <strain>cv. Columbia</strain>
    </source>
</reference>
<reference key="4">
    <citation type="journal article" date="2006" name="Plant Physiol.">
        <title>Transcriptional regulation of gibberellin metabolism genes by auxin signaling in Arabidopsis.</title>
        <authorList>
            <person name="Frigerio M."/>
            <person name="Alabadi D."/>
            <person name="Perez-Gomez J."/>
            <person name="Garcia-Carcel L."/>
            <person name="Phillips A.L."/>
            <person name="Hedden P."/>
            <person name="Blazquez M.A."/>
        </authorList>
    </citation>
    <scope>INDUCTION BY AUXIN AND PACLOBUTRAZOL</scope>
</reference>
<reference key="5">
    <citation type="journal article" date="2008" name="Plant J.">
        <title>The gibberellin biosynthetic genes AtGA20ox1 and AtGA20ox2 act, partially redundantly, to promote growth and development throughout the Arabidopsis life cycle.</title>
        <authorList>
            <person name="Rieu I."/>
            <person name="Ruiz-Rivero O."/>
            <person name="Fernandez-Garcia N."/>
            <person name="Griffiths J."/>
            <person name="Powers S.J."/>
            <person name="Gong F."/>
            <person name="Linhartova T."/>
            <person name="Eriksson S."/>
            <person name="Nilsson O."/>
            <person name="Thomas S.G."/>
            <person name="Phillips A.L."/>
            <person name="Hedden P."/>
        </authorList>
    </citation>
    <scope>TISSUE SPECIFICITY</scope>
    <scope>INDUCTION BY GIBBERELLIN</scope>
    <source>
        <strain>cv. Columbia</strain>
    </source>
</reference>
<reference key="6">
    <citation type="journal article" date="2011" name="Gene">
        <title>Evolutionary analysis of three gibberellin oxidase genes in rice, Arabidopsis, and soybean.</title>
        <authorList>
            <person name="Han F."/>
            <person name="Zhu B."/>
        </authorList>
    </citation>
    <scope>GENE FAMILY</scope>
</reference>
<name>GAOX4_ARATH</name>
<comment type="function">
    <text evidence="1">Key oxidase enzyme in the biosynthesis of gibberellin that catalyzes the conversion of GA12 and GA53 to GA9 and GA20 respectively, via a three-step oxidation at C-20 of the GA skeleton.</text>
</comment>
<comment type="catalytic activity">
    <reaction evidence="2">
        <text>gibberellin A12 + 2 2-oxoglutarate + 3 O2 + H(+) = gibberellin A9 + 2 succinate + 3 CO2 + 2 H2O</text>
        <dbReference type="Rhea" id="RHEA:60772"/>
        <dbReference type="ChEBI" id="CHEBI:15377"/>
        <dbReference type="ChEBI" id="CHEBI:15378"/>
        <dbReference type="ChEBI" id="CHEBI:15379"/>
        <dbReference type="ChEBI" id="CHEBI:16526"/>
        <dbReference type="ChEBI" id="CHEBI:16810"/>
        <dbReference type="ChEBI" id="CHEBI:30031"/>
        <dbReference type="ChEBI" id="CHEBI:58627"/>
        <dbReference type="ChEBI" id="CHEBI:73255"/>
    </reaction>
    <physiologicalReaction direction="left-to-right" evidence="2">
        <dbReference type="Rhea" id="RHEA:60773"/>
    </physiologicalReaction>
</comment>
<comment type="catalytic activity">
    <reaction evidence="2">
        <text>gibberellin A53 + 2 2-oxoglutarate + 3 O2 + H(+) = gibberellin A20 + 2 succinate + 3 CO2 + 2 H2O</text>
        <dbReference type="Rhea" id="RHEA:60796"/>
        <dbReference type="ChEBI" id="CHEBI:15377"/>
        <dbReference type="ChEBI" id="CHEBI:15378"/>
        <dbReference type="ChEBI" id="CHEBI:15379"/>
        <dbReference type="ChEBI" id="CHEBI:16526"/>
        <dbReference type="ChEBI" id="CHEBI:16810"/>
        <dbReference type="ChEBI" id="CHEBI:30031"/>
        <dbReference type="ChEBI" id="CHEBI:58526"/>
        <dbReference type="ChEBI" id="CHEBI:143954"/>
    </reaction>
    <physiologicalReaction direction="left-to-right" evidence="2">
        <dbReference type="Rhea" id="RHEA:60797"/>
    </physiologicalReaction>
</comment>
<comment type="cofactor">
    <cofactor evidence="4">
        <name>Fe(2+)</name>
        <dbReference type="ChEBI" id="CHEBI:29033"/>
    </cofactor>
    <text evidence="4">Binds 1 Fe(2+) ion per subunit.</text>
</comment>
<comment type="cofactor">
    <cofactor evidence="1">
        <name>L-ascorbate</name>
        <dbReference type="ChEBI" id="CHEBI:38290"/>
    </cofactor>
</comment>
<comment type="pathway">
    <text>Plant hormone biosynthesis; gibberellin biosynthesis.</text>
</comment>
<comment type="tissue specificity">
    <text evidence="6">Expressed in roots. Detected in leaves, inflorescences and siliques, but not in stems and dry seeds.</text>
</comment>
<comment type="induction">
    <text evidence="5 6">Not controlled by the level of physiologically active gibberellin or by auxin. Up-regulated by paclobutrazol.</text>
</comment>
<comment type="similarity">
    <text evidence="7">Belongs to the iron/ascorbate-dependent oxidoreductase family. GA20OX subfamily.</text>
</comment>
<sequence length="376" mass="43133">MECIIKLPQRFNKNKSKKNPLRIFDSTVLNHQPDHIPQEFVWPDHEKPSKNVPILQVPVIDLAGFLSNDPLLVSEAERLVSEAAKKHGFFLVTNHGVDERLLSTAHKLMDTFFKSPNYEKLKAQRKVGETTGYASSFVGRFKENLPWKETLSFSFSPTEKSENYSQTVKNYISKTMGDGYKDFGSVYQEYAETMSNLSLKIMELLGMSLGIKREHFREFFEDNESIFRLNYYPKCKQPDLVLGTGPHCDPTSLTILQQDQVSGLQVFVDNQWQSIPPIPQALVVNIGDTLMALTNGIYKSCLHRAVVNGETTRKTLAFFLCPKVDKVVKPPSELEGERAYPDFTWSMFLEFTMKHYRADMNTLEEFTNWLKNKGSF</sequence>
<accession>Q9C955</accession>
<feature type="chain" id="PRO_0000422353" description="Gibberellin 20 oxidase 4">
    <location>
        <begin position="1"/>
        <end position="376"/>
    </location>
</feature>
<feature type="domain" description="Fe2OG dioxygenase" evidence="4">
    <location>
        <begin position="222"/>
        <end position="322"/>
    </location>
</feature>
<feature type="active site" evidence="3">
    <location>
        <position position="313"/>
    </location>
</feature>
<feature type="binding site" evidence="4">
    <location>
        <position position="247"/>
    </location>
    <ligand>
        <name>Fe cation</name>
        <dbReference type="ChEBI" id="CHEBI:24875"/>
    </ligand>
</feature>
<feature type="binding site" evidence="4">
    <location>
        <position position="249"/>
    </location>
    <ligand>
        <name>Fe cation</name>
        <dbReference type="ChEBI" id="CHEBI:24875"/>
    </ligand>
</feature>
<feature type="binding site" evidence="4">
    <location>
        <position position="303"/>
    </location>
    <ligand>
        <name>Fe cation</name>
        <dbReference type="ChEBI" id="CHEBI:24875"/>
    </ligand>
</feature>
<gene>
    <name type="primary">GA20OX4</name>
    <name type="ordered locus">At1g60980</name>
    <name type="ORF">T7P1.12</name>
</gene>
<organism>
    <name type="scientific">Arabidopsis thaliana</name>
    <name type="common">Mouse-ear cress</name>
    <dbReference type="NCBI Taxonomy" id="3702"/>
    <lineage>
        <taxon>Eukaryota</taxon>
        <taxon>Viridiplantae</taxon>
        <taxon>Streptophyta</taxon>
        <taxon>Embryophyta</taxon>
        <taxon>Tracheophyta</taxon>
        <taxon>Spermatophyta</taxon>
        <taxon>Magnoliopsida</taxon>
        <taxon>eudicotyledons</taxon>
        <taxon>Gunneridae</taxon>
        <taxon>Pentapetalae</taxon>
        <taxon>rosids</taxon>
        <taxon>malvids</taxon>
        <taxon>Brassicales</taxon>
        <taxon>Brassicaceae</taxon>
        <taxon>Camelineae</taxon>
        <taxon>Arabidopsis</taxon>
    </lineage>
</organism>
<keyword id="KW-0408">Iron</keyword>
<keyword id="KW-0479">Metal-binding</keyword>
<keyword id="KW-0560">Oxidoreductase</keyword>
<keyword id="KW-1185">Reference proteome</keyword>
<proteinExistence type="evidence at transcript level"/>
<protein>
    <recommendedName>
        <fullName>Gibberellin 20 oxidase 4</fullName>
        <ecNumber evidence="2">1.14.11.-</ecNumber>
    </recommendedName>
    <alternativeName>
        <fullName>GA 20-oxidase 4</fullName>
    </alternativeName>
    <alternativeName>
        <fullName>Gibberellin C-20 oxidase 4</fullName>
    </alternativeName>
</protein>
<evidence type="ECO:0000250" key="1"/>
<evidence type="ECO:0000250" key="2">
    <source>
        <dbReference type="UniProtKB" id="O04705"/>
    </source>
</evidence>
<evidence type="ECO:0000255" key="3"/>
<evidence type="ECO:0000255" key="4">
    <source>
        <dbReference type="PROSITE-ProRule" id="PRU00805"/>
    </source>
</evidence>
<evidence type="ECO:0000269" key="5">
    <source>
    </source>
</evidence>
<evidence type="ECO:0000269" key="6">
    <source>
    </source>
</evidence>
<evidence type="ECO:0000305" key="7"/>